<organism>
    <name type="scientific">Actinobacillus pleuropneumoniae serotype 5b (strain L20)</name>
    <dbReference type="NCBI Taxonomy" id="416269"/>
    <lineage>
        <taxon>Bacteria</taxon>
        <taxon>Pseudomonadati</taxon>
        <taxon>Pseudomonadota</taxon>
        <taxon>Gammaproteobacteria</taxon>
        <taxon>Pasteurellales</taxon>
        <taxon>Pasteurellaceae</taxon>
        <taxon>Actinobacillus</taxon>
    </lineage>
</organism>
<protein>
    <recommendedName>
        <fullName evidence="1">Bifunctional protein GlmU</fullName>
    </recommendedName>
    <domain>
        <recommendedName>
            <fullName evidence="1">UDP-N-acetylglucosamine pyrophosphorylase</fullName>
            <ecNumber evidence="1">2.7.7.23</ecNumber>
        </recommendedName>
        <alternativeName>
            <fullName evidence="1">N-acetylglucosamine-1-phosphate uridyltransferase</fullName>
        </alternativeName>
    </domain>
    <domain>
        <recommendedName>
            <fullName evidence="1">Glucosamine-1-phosphate N-acetyltransferase</fullName>
            <ecNumber evidence="1">2.3.1.157</ecNumber>
        </recommendedName>
    </domain>
</protein>
<accession>A3MZV4</accession>
<keyword id="KW-0012">Acyltransferase</keyword>
<keyword id="KW-0133">Cell shape</keyword>
<keyword id="KW-0961">Cell wall biogenesis/degradation</keyword>
<keyword id="KW-0963">Cytoplasm</keyword>
<keyword id="KW-0460">Magnesium</keyword>
<keyword id="KW-0479">Metal-binding</keyword>
<keyword id="KW-0511">Multifunctional enzyme</keyword>
<keyword id="KW-0548">Nucleotidyltransferase</keyword>
<keyword id="KW-0573">Peptidoglycan synthesis</keyword>
<keyword id="KW-1185">Reference proteome</keyword>
<keyword id="KW-0677">Repeat</keyword>
<keyword id="KW-0808">Transferase</keyword>
<name>GLMU_ACTP2</name>
<proteinExistence type="inferred from homology"/>
<feature type="chain" id="PRO_1000056134" description="Bifunctional protein GlmU">
    <location>
        <begin position="1"/>
        <end position="457"/>
    </location>
</feature>
<feature type="region of interest" description="Pyrophosphorylase" evidence="1">
    <location>
        <begin position="1"/>
        <end position="227"/>
    </location>
</feature>
<feature type="region of interest" description="Linker" evidence="1">
    <location>
        <begin position="228"/>
        <end position="248"/>
    </location>
</feature>
<feature type="region of interest" description="N-acetyltransferase" evidence="1">
    <location>
        <begin position="249"/>
        <end position="457"/>
    </location>
</feature>
<feature type="active site" description="Proton acceptor" evidence="1">
    <location>
        <position position="361"/>
    </location>
</feature>
<feature type="binding site" evidence="1">
    <location>
        <begin position="9"/>
        <end position="12"/>
    </location>
    <ligand>
        <name>UDP-N-acetyl-alpha-D-glucosamine</name>
        <dbReference type="ChEBI" id="CHEBI:57705"/>
    </ligand>
</feature>
<feature type="binding site" evidence="1">
    <location>
        <position position="23"/>
    </location>
    <ligand>
        <name>UDP-N-acetyl-alpha-D-glucosamine</name>
        <dbReference type="ChEBI" id="CHEBI:57705"/>
    </ligand>
</feature>
<feature type="binding site" evidence="1">
    <location>
        <position position="74"/>
    </location>
    <ligand>
        <name>UDP-N-acetyl-alpha-D-glucosamine</name>
        <dbReference type="ChEBI" id="CHEBI:57705"/>
    </ligand>
</feature>
<feature type="binding site" evidence="1">
    <location>
        <begin position="79"/>
        <end position="80"/>
    </location>
    <ligand>
        <name>UDP-N-acetyl-alpha-D-glucosamine</name>
        <dbReference type="ChEBI" id="CHEBI:57705"/>
    </ligand>
</feature>
<feature type="binding site" evidence="1">
    <location>
        <begin position="101"/>
        <end position="103"/>
    </location>
    <ligand>
        <name>UDP-N-acetyl-alpha-D-glucosamine</name>
        <dbReference type="ChEBI" id="CHEBI:57705"/>
    </ligand>
</feature>
<feature type="binding site" evidence="1">
    <location>
        <position position="103"/>
    </location>
    <ligand>
        <name>Mg(2+)</name>
        <dbReference type="ChEBI" id="CHEBI:18420"/>
    </ligand>
</feature>
<feature type="binding site" evidence="1">
    <location>
        <position position="138"/>
    </location>
    <ligand>
        <name>UDP-N-acetyl-alpha-D-glucosamine</name>
        <dbReference type="ChEBI" id="CHEBI:57705"/>
    </ligand>
</feature>
<feature type="binding site" evidence="1">
    <location>
        <position position="152"/>
    </location>
    <ligand>
        <name>UDP-N-acetyl-alpha-D-glucosamine</name>
        <dbReference type="ChEBI" id="CHEBI:57705"/>
    </ligand>
</feature>
<feature type="binding site" evidence="1">
    <location>
        <position position="167"/>
    </location>
    <ligand>
        <name>UDP-N-acetyl-alpha-D-glucosamine</name>
        <dbReference type="ChEBI" id="CHEBI:57705"/>
    </ligand>
</feature>
<feature type="binding site" evidence="1">
    <location>
        <position position="225"/>
    </location>
    <ligand>
        <name>Mg(2+)</name>
        <dbReference type="ChEBI" id="CHEBI:18420"/>
    </ligand>
</feature>
<feature type="binding site" evidence="1">
    <location>
        <position position="225"/>
    </location>
    <ligand>
        <name>UDP-N-acetyl-alpha-D-glucosamine</name>
        <dbReference type="ChEBI" id="CHEBI:57705"/>
    </ligand>
</feature>
<feature type="binding site" evidence="1">
    <location>
        <position position="331"/>
    </location>
    <ligand>
        <name>UDP-N-acetyl-alpha-D-glucosamine</name>
        <dbReference type="ChEBI" id="CHEBI:57705"/>
    </ligand>
</feature>
<feature type="binding site" evidence="1">
    <location>
        <position position="349"/>
    </location>
    <ligand>
        <name>UDP-N-acetyl-alpha-D-glucosamine</name>
        <dbReference type="ChEBI" id="CHEBI:57705"/>
    </ligand>
</feature>
<feature type="binding site" evidence="1">
    <location>
        <position position="364"/>
    </location>
    <ligand>
        <name>UDP-N-acetyl-alpha-D-glucosamine</name>
        <dbReference type="ChEBI" id="CHEBI:57705"/>
    </ligand>
</feature>
<feature type="binding site" evidence="1">
    <location>
        <position position="375"/>
    </location>
    <ligand>
        <name>UDP-N-acetyl-alpha-D-glucosamine</name>
        <dbReference type="ChEBI" id="CHEBI:57705"/>
    </ligand>
</feature>
<feature type="binding site" evidence="1">
    <location>
        <position position="378"/>
    </location>
    <ligand>
        <name>acetyl-CoA</name>
        <dbReference type="ChEBI" id="CHEBI:57288"/>
    </ligand>
</feature>
<feature type="binding site" evidence="1">
    <location>
        <begin position="384"/>
        <end position="385"/>
    </location>
    <ligand>
        <name>acetyl-CoA</name>
        <dbReference type="ChEBI" id="CHEBI:57288"/>
    </ligand>
</feature>
<feature type="binding site" evidence="1">
    <location>
        <position position="403"/>
    </location>
    <ligand>
        <name>acetyl-CoA</name>
        <dbReference type="ChEBI" id="CHEBI:57288"/>
    </ligand>
</feature>
<feature type="binding site" evidence="1">
    <location>
        <position position="421"/>
    </location>
    <ligand>
        <name>acetyl-CoA</name>
        <dbReference type="ChEBI" id="CHEBI:57288"/>
    </ligand>
</feature>
<feature type="binding site" evidence="1">
    <location>
        <position position="438"/>
    </location>
    <ligand>
        <name>acetyl-CoA</name>
        <dbReference type="ChEBI" id="CHEBI:57288"/>
    </ligand>
</feature>
<gene>
    <name evidence="1" type="primary">glmU</name>
    <name type="ordered locus">APL_0588</name>
</gene>
<dbReference type="EC" id="2.7.7.23" evidence="1"/>
<dbReference type="EC" id="2.3.1.157" evidence="1"/>
<dbReference type="EMBL" id="CP000569">
    <property type="protein sequence ID" value="ABN73690.1"/>
    <property type="molecule type" value="Genomic_DNA"/>
</dbReference>
<dbReference type="RefSeq" id="WP_009874994.1">
    <property type="nucleotide sequence ID" value="NC_009053.1"/>
</dbReference>
<dbReference type="SMR" id="A3MZV4"/>
<dbReference type="STRING" id="416269.APL_0588"/>
<dbReference type="EnsemblBacteria" id="ABN73690">
    <property type="protein sequence ID" value="ABN73690"/>
    <property type="gene ID" value="APL_0588"/>
</dbReference>
<dbReference type="KEGG" id="apl:APL_0588"/>
<dbReference type="PATRIC" id="fig|416269.6.peg.619"/>
<dbReference type="eggNOG" id="COG1207">
    <property type="taxonomic scope" value="Bacteria"/>
</dbReference>
<dbReference type="HOGENOM" id="CLU_029499_15_2_6"/>
<dbReference type="UniPathway" id="UPA00113">
    <property type="reaction ID" value="UER00532"/>
</dbReference>
<dbReference type="UniPathway" id="UPA00113">
    <property type="reaction ID" value="UER00533"/>
</dbReference>
<dbReference type="UniPathway" id="UPA00973"/>
<dbReference type="Proteomes" id="UP000001432">
    <property type="component" value="Chromosome"/>
</dbReference>
<dbReference type="GO" id="GO:0005737">
    <property type="term" value="C:cytoplasm"/>
    <property type="evidence" value="ECO:0007669"/>
    <property type="project" value="UniProtKB-SubCell"/>
</dbReference>
<dbReference type="GO" id="GO:0016020">
    <property type="term" value="C:membrane"/>
    <property type="evidence" value="ECO:0007669"/>
    <property type="project" value="GOC"/>
</dbReference>
<dbReference type="GO" id="GO:0019134">
    <property type="term" value="F:glucosamine-1-phosphate N-acetyltransferase activity"/>
    <property type="evidence" value="ECO:0007669"/>
    <property type="project" value="UniProtKB-UniRule"/>
</dbReference>
<dbReference type="GO" id="GO:0000287">
    <property type="term" value="F:magnesium ion binding"/>
    <property type="evidence" value="ECO:0007669"/>
    <property type="project" value="UniProtKB-UniRule"/>
</dbReference>
<dbReference type="GO" id="GO:0003977">
    <property type="term" value="F:UDP-N-acetylglucosamine diphosphorylase activity"/>
    <property type="evidence" value="ECO:0007669"/>
    <property type="project" value="UniProtKB-UniRule"/>
</dbReference>
<dbReference type="GO" id="GO:0000902">
    <property type="term" value="P:cell morphogenesis"/>
    <property type="evidence" value="ECO:0007669"/>
    <property type="project" value="UniProtKB-UniRule"/>
</dbReference>
<dbReference type="GO" id="GO:0071555">
    <property type="term" value="P:cell wall organization"/>
    <property type="evidence" value="ECO:0007669"/>
    <property type="project" value="UniProtKB-KW"/>
</dbReference>
<dbReference type="GO" id="GO:0009245">
    <property type="term" value="P:lipid A biosynthetic process"/>
    <property type="evidence" value="ECO:0007669"/>
    <property type="project" value="UniProtKB-UniRule"/>
</dbReference>
<dbReference type="GO" id="GO:0009252">
    <property type="term" value="P:peptidoglycan biosynthetic process"/>
    <property type="evidence" value="ECO:0007669"/>
    <property type="project" value="UniProtKB-UniRule"/>
</dbReference>
<dbReference type="GO" id="GO:0008360">
    <property type="term" value="P:regulation of cell shape"/>
    <property type="evidence" value="ECO:0007669"/>
    <property type="project" value="UniProtKB-KW"/>
</dbReference>
<dbReference type="GO" id="GO:0006048">
    <property type="term" value="P:UDP-N-acetylglucosamine biosynthetic process"/>
    <property type="evidence" value="ECO:0007669"/>
    <property type="project" value="UniProtKB-UniPathway"/>
</dbReference>
<dbReference type="CDD" id="cd02540">
    <property type="entry name" value="GT2_GlmU_N_bac"/>
    <property type="match status" value="1"/>
</dbReference>
<dbReference type="CDD" id="cd03353">
    <property type="entry name" value="LbH_GlmU_C"/>
    <property type="match status" value="1"/>
</dbReference>
<dbReference type="FunFam" id="3.90.550.10:FF:000006">
    <property type="entry name" value="Bifunctional protein GlmU"/>
    <property type="match status" value="1"/>
</dbReference>
<dbReference type="Gene3D" id="2.160.10.10">
    <property type="entry name" value="Hexapeptide repeat proteins"/>
    <property type="match status" value="1"/>
</dbReference>
<dbReference type="Gene3D" id="3.90.550.10">
    <property type="entry name" value="Spore Coat Polysaccharide Biosynthesis Protein SpsA, Chain A"/>
    <property type="match status" value="1"/>
</dbReference>
<dbReference type="HAMAP" id="MF_01631">
    <property type="entry name" value="GlmU"/>
    <property type="match status" value="1"/>
</dbReference>
<dbReference type="InterPro" id="IPR005882">
    <property type="entry name" value="Bifunctional_GlmU"/>
</dbReference>
<dbReference type="InterPro" id="IPR050065">
    <property type="entry name" value="GlmU-like"/>
</dbReference>
<dbReference type="InterPro" id="IPR038009">
    <property type="entry name" value="GlmU_C_LbH"/>
</dbReference>
<dbReference type="InterPro" id="IPR001451">
    <property type="entry name" value="Hexapep"/>
</dbReference>
<dbReference type="InterPro" id="IPR018357">
    <property type="entry name" value="Hexapep_transf_CS"/>
</dbReference>
<dbReference type="InterPro" id="IPR025877">
    <property type="entry name" value="MobA-like_NTP_Trfase"/>
</dbReference>
<dbReference type="InterPro" id="IPR029044">
    <property type="entry name" value="Nucleotide-diphossugar_trans"/>
</dbReference>
<dbReference type="InterPro" id="IPR011004">
    <property type="entry name" value="Trimer_LpxA-like_sf"/>
</dbReference>
<dbReference type="NCBIfam" id="TIGR01173">
    <property type="entry name" value="glmU"/>
    <property type="match status" value="1"/>
</dbReference>
<dbReference type="NCBIfam" id="NF006986">
    <property type="entry name" value="PRK09451.1"/>
    <property type="match status" value="1"/>
</dbReference>
<dbReference type="PANTHER" id="PTHR43584:SF3">
    <property type="entry name" value="BIFUNCTIONAL PROTEIN GLMU"/>
    <property type="match status" value="1"/>
</dbReference>
<dbReference type="PANTHER" id="PTHR43584">
    <property type="entry name" value="NUCLEOTIDYL TRANSFERASE"/>
    <property type="match status" value="1"/>
</dbReference>
<dbReference type="Pfam" id="PF00132">
    <property type="entry name" value="Hexapep"/>
    <property type="match status" value="2"/>
</dbReference>
<dbReference type="Pfam" id="PF12804">
    <property type="entry name" value="NTP_transf_3"/>
    <property type="match status" value="1"/>
</dbReference>
<dbReference type="SUPFAM" id="SSF53448">
    <property type="entry name" value="Nucleotide-diphospho-sugar transferases"/>
    <property type="match status" value="1"/>
</dbReference>
<dbReference type="SUPFAM" id="SSF51161">
    <property type="entry name" value="Trimeric LpxA-like enzymes"/>
    <property type="match status" value="1"/>
</dbReference>
<dbReference type="PROSITE" id="PS00101">
    <property type="entry name" value="HEXAPEP_TRANSFERASES"/>
    <property type="match status" value="1"/>
</dbReference>
<sequence>MTQLSVVILAAGKGTRMYSDLPKVLHTVAGKPMVQHVIDTAKQIDAKQIHLIYGHGGELLQQRLSSEPVNWVLQAEQLGTGHAMQQAAPFFADDENILMLYGDAPLITKETLERLIAAKPANGIALLTVELENPTGYGRIIRENGSVVAIVEQKDANAEQLKIREVNTGVMVASGASFKKWLANLNNNNAQGEYYITDVIAMANQDGYKVQAVQASEFMEVEGANNRLQLAALERFYQKTQAEKLLLAGVRLIDPARFDIRGSLTHGKDVEIDVNVIIEGEVKLGNRVRIGAGCVLKNCEIGDDVEIKPYSVIEDAVVGKAAQIGPFSRLRPGANLAEETHVGNFVEIKNAQVGKGSKVNHLTYVGDAEVGSNCNIGAGVITCNYDGANKFKTIIGNNVFVGSDSQLVAPVTIADGATIGAGATVTKDVAENELVISRVPQRHIQGWQRPTKKKIAD</sequence>
<reference key="1">
    <citation type="journal article" date="2008" name="J. Bacteriol.">
        <title>The complete genome sequence of Actinobacillus pleuropneumoniae L20 (serotype 5b).</title>
        <authorList>
            <person name="Foote S.J."/>
            <person name="Bosse J.T."/>
            <person name="Bouevitch A.B."/>
            <person name="Langford P.R."/>
            <person name="Young N.M."/>
            <person name="Nash J.H.E."/>
        </authorList>
    </citation>
    <scope>NUCLEOTIDE SEQUENCE [LARGE SCALE GENOMIC DNA]</scope>
    <source>
        <strain>L20</strain>
    </source>
</reference>
<evidence type="ECO:0000255" key="1">
    <source>
        <dbReference type="HAMAP-Rule" id="MF_01631"/>
    </source>
</evidence>
<comment type="function">
    <text evidence="1">Catalyzes the last two sequential reactions in the de novo biosynthetic pathway for UDP-N-acetylglucosamine (UDP-GlcNAc). The C-terminal domain catalyzes the transfer of acetyl group from acetyl coenzyme A to glucosamine-1-phosphate (GlcN-1-P) to produce N-acetylglucosamine-1-phosphate (GlcNAc-1-P), which is converted into UDP-GlcNAc by the transfer of uridine 5-monophosphate (from uridine 5-triphosphate), a reaction catalyzed by the N-terminal domain.</text>
</comment>
<comment type="catalytic activity">
    <reaction evidence="1">
        <text>alpha-D-glucosamine 1-phosphate + acetyl-CoA = N-acetyl-alpha-D-glucosamine 1-phosphate + CoA + H(+)</text>
        <dbReference type="Rhea" id="RHEA:13725"/>
        <dbReference type="ChEBI" id="CHEBI:15378"/>
        <dbReference type="ChEBI" id="CHEBI:57287"/>
        <dbReference type="ChEBI" id="CHEBI:57288"/>
        <dbReference type="ChEBI" id="CHEBI:57776"/>
        <dbReference type="ChEBI" id="CHEBI:58516"/>
        <dbReference type="EC" id="2.3.1.157"/>
    </reaction>
</comment>
<comment type="catalytic activity">
    <reaction evidence="1">
        <text>N-acetyl-alpha-D-glucosamine 1-phosphate + UTP + H(+) = UDP-N-acetyl-alpha-D-glucosamine + diphosphate</text>
        <dbReference type="Rhea" id="RHEA:13509"/>
        <dbReference type="ChEBI" id="CHEBI:15378"/>
        <dbReference type="ChEBI" id="CHEBI:33019"/>
        <dbReference type="ChEBI" id="CHEBI:46398"/>
        <dbReference type="ChEBI" id="CHEBI:57705"/>
        <dbReference type="ChEBI" id="CHEBI:57776"/>
        <dbReference type="EC" id="2.7.7.23"/>
    </reaction>
</comment>
<comment type="cofactor">
    <cofactor evidence="1">
        <name>Mg(2+)</name>
        <dbReference type="ChEBI" id="CHEBI:18420"/>
    </cofactor>
    <text evidence="1">Binds 1 Mg(2+) ion per subunit.</text>
</comment>
<comment type="pathway">
    <text evidence="1">Nucleotide-sugar biosynthesis; UDP-N-acetyl-alpha-D-glucosamine biosynthesis; N-acetyl-alpha-D-glucosamine 1-phosphate from alpha-D-glucosamine 6-phosphate (route II): step 2/2.</text>
</comment>
<comment type="pathway">
    <text evidence="1">Nucleotide-sugar biosynthesis; UDP-N-acetyl-alpha-D-glucosamine biosynthesis; UDP-N-acetyl-alpha-D-glucosamine from N-acetyl-alpha-D-glucosamine 1-phosphate: step 1/1.</text>
</comment>
<comment type="pathway">
    <text evidence="1">Bacterial outer membrane biogenesis; LPS lipid A biosynthesis.</text>
</comment>
<comment type="subunit">
    <text evidence="1">Homotrimer.</text>
</comment>
<comment type="subcellular location">
    <subcellularLocation>
        <location evidence="1">Cytoplasm</location>
    </subcellularLocation>
</comment>
<comment type="similarity">
    <text evidence="1">In the N-terminal section; belongs to the N-acetylglucosamine-1-phosphate uridyltransferase family.</text>
</comment>
<comment type="similarity">
    <text evidence="1">In the C-terminal section; belongs to the transferase hexapeptide repeat family.</text>
</comment>